<comment type="catalytic activity">
    <reaction evidence="1">
        <text>D-erythro-1-(imidazol-4-yl)glycerol 3-phosphate = 3-(imidazol-4-yl)-2-oxopropyl phosphate + H2O</text>
        <dbReference type="Rhea" id="RHEA:11040"/>
        <dbReference type="ChEBI" id="CHEBI:15377"/>
        <dbReference type="ChEBI" id="CHEBI:57766"/>
        <dbReference type="ChEBI" id="CHEBI:58278"/>
        <dbReference type="EC" id="4.2.1.19"/>
    </reaction>
</comment>
<comment type="pathway">
    <text evidence="1">Amino-acid biosynthesis; L-histidine biosynthesis; L-histidine from 5-phospho-alpha-D-ribose 1-diphosphate: step 6/9.</text>
</comment>
<comment type="subcellular location">
    <subcellularLocation>
        <location evidence="1">Cytoplasm</location>
    </subcellularLocation>
</comment>
<comment type="similarity">
    <text evidence="1">Belongs to the imidazoleglycerol-phosphate dehydratase family.</text>
</comment>
<protein>
    <recommendedName>
        <fullName evidence="1">Imidazoleglycerol-phosphate dehydratase</fullName>
        <shortName evidence="1">IGPD</shortName>
        <ecNumber evidence="1">4.2.1.19</ecNumber>
    </recommendedName>
</protein>
<feature type="chain" id="PRO_1000010320" description="Imidazoleglycerol-phosphate dehydratase">
    <location>
        <begin position="1"/>
        <end position="195"/>
    </location>
</feature>
<gene>
    <name evidence="1" type="primary">hisB</name>
    <name type="ordered locus">Ppro_3040</name>
</gene>
<dbReference type="EC" id="4.2.1.19" evidence="1"/>
<dbReference type="EMBL" id="CP000482">
    <property type="protein sequence ID" value="ABL00638.1"/>
    <property type="molecule type" value="Genomic_DNA"/>
</dbReference>
<dbReference type="RefSeq" id="WP_011736873.1">
    <property type="nucleotide sequence ID" value="NC_008609.1"/>
</dbReference>
<dbReference type="SMR" id="A1ATG7"/>
<dbReference type="STRING" id="338966.Ppro_3040"/>
<dbReference type="KEGG" id="ppd:Ppro_3040"/>
<dbReference type="eggNOG" id="COG0131">
    <property type="taxonomic scope" value="Bacteria"/>
</dbReference>
<dbReference type="HOGENOM" id="CLU_044308_2_0_7"/>
<dbReference type="OrthoDB" id="9790411at2"/>
<dbReference type="UniPathway" id="UPA00031">
    <property type="reaction ID" value="UER00011"/>
</dbReference>
<dbReference type="Proteomes" id="UP000006732">
    <property type="component" value="Chromosome"/>
</dbReference>
<dbReference type="GO" id="GO:0005737">
    <property type="term" value="C:cytoplasm"/>
    <property type="evidence" value="ECO:0007669"/>
    <property type="project" value="UniProtKB-SubCell"/>
</dbReference>
<dbReference type="GO" id="GO:0004424">
    <property type="term" value="F:imidazoleglycerol-phosphate dehydratase activity"/>
    <property type="evidence" value="ECO:0007669"/>
    <property type="project" value="UniProtKB-UniRule"/>
</dbReference>
<dbReference type="GO" id="GO:0000105">
    <property type="term" value="P:L-histidine biosynthetic process"/>
    <property type="evidence" value="ECO:0007669"/>
    <property type="project" value="UniProtKB-UniRule"/>
</dbReference>
<dbReference type="CDD" id="cd07914">
    <property type="entry name" value="IGPD"/>
    <property type="match status" value="1"/>
</dbReference>
<dbReference type="FunFam" id="3.30.230.40:FF:000001">
    <property type="entry name" value="Imidazoleglycerol-phosphate dehydratase HisB"/>
    <property type="match status" value="1"/>
</dbReference>
<dbReference type="FunFam" id="3.30.230.40:FF:000003">
    <property type="entry name" value="Imidazoleglycerol-phosphate dehydratase HisB"/>
    <property type="match status" value="1"/>
</dbReference>
<dbReference type="Gene3D" id="3.30.230.40">
    <property type="entry name" value="Imidazole glycerol phosphate dehydratase, domain 1"/>
    <property type="match status" value="2"/>
</dbReference>
<dbReference type="HAMAP" id="MF_00076">
    <property type="entry name" value="HisB"/>
    <property type="match status" value="1"/>
</dbReference>
<dbReference type="InterPro" id="IPR038494">
    <property type="entry name" value="IGPD_sf"/>
</dbReference>
<dbReference type="InterPro" id="IPR000807">
    <property type="entry name" value="ImidazoleglycerolP_deHydtase"/>
</dbReference>
<dbReference type="InterPro" id="IPR020565">
    <property type="entry name" value="ImidazoleglycerP_deHydtase_CS"/>
</dbReference>
<dbReference type="InterPro" id="IPR020568">
    <property type="entry name" value="Ribosomal_Su5_D2-typ_SF"/>
</dbReference>
<dbReference type="NCBIfam" id="NF002109">
    <property type="entry name" value="PRK00951.1-5"/>
    <property type="match status" value="1"/>
</dbReference>
<dbReference type="NCBIfam" id="NF002111">
    <property type="entry name" value="PRK00951.2-1"/>
    <property type="match status" value="1"/>
</dbReference>
<dbReference type="NCBIfam" id="NF002114">
    <property type="entry name" value="PRK00951.2-4"/>
    <property type="match status" value="1"/>
</dbReference>
<dbReference type="NCBIfam" id="NF002115">
    <property type="entry name" value="PRK00951.2-5"/>
    <property type="match status" value="1"/>
</dbReference>
<dbReference type="PANTHER" id="PTHR23133:SF2">
    <property type="entry name" value="IMIDAZOLEGLYCEROL-PHOSPHATE DEHYDRATASE"/>
    <property type="match status" value="1"/>
</dbReference>
<dbReference type="PANTHER" id="PTHR23133">
    <property type="entry name" value="IMIDAZOLEGLYCEROL-PHOSPHATE DEHYDRATASE HIS7"/>
    <property type="match status" value="1"/>
</dbReference>
<dbReference type="Pfam" id="PF00475">
    <property type="entry name" value="IGPD"/>
    <property type="match status" value="1"/>
</dbReference>
<dbReference type="SUPFAM" id="SSF54211">
    <property type="entry name" value="Ribosomal protein S5 domain 2-like"/>
    <property type="match status" value="2"/>
</dbReference>
<dbReference type="PROSITE" id="PS00954">
    <property type="entry name" value="IGP_DEHYDRATASE_1"/>
    <property type="match status" value="1"/>
</dbReference>
<dbReference type="PROSITE" id="PS00955">
    <property type="entry name" value="IGP_DEHYDRATASE_2"/>
    <property type="match status" value="1"/>
</dbReference>
<keyword id="KW-0028">Amino-acid biosynthesis</keyword>
<keyword id="KW-0963">Cytoplasm</keyword>
<keyword id="KW-0368">Histidine biosynthesis</keyword>
<keyword id="KW-0456">Lyase</keyword>
<keyword id="KW-1185">Reference proteome</keyword>
<name>HIS7_PELPD</name>
<accession>A1ATG7</accession>
<proteinExistence type="inferred from homology"/>
<evidence type="ECO:0000255" key="1">
    <source>
        <dbReference type="HAMAP-Rule" id="MF_00076"/>
    </source>
</evidence>
<reference key="1">
    <citation type="submission" date="2006-10" db="EMBL/GenBank/DDBJ databases">
        <title>Complete sequence of chromosome of Pelobacter propionicus DSM 2379.</title>
        <authorList>
            <consortium name="US DOE Joint Genome Institute"/>
            <person name="Copeland A."/>
            <person name="Lucas S."/>
            <person name="Lapidus A."/>
            <person name="Barry K."/>
            <person name="Detter J.C."/>
            <person name="Glavina del Rio T."/>
            <person name="Hammon N."/>
            <person name="Israni S."/>
            <person name="Dalin E."/>
            <person name="Tice H."/>
            <person name="Pitluck S."/>
            <person name="Saunders E."/>
            <person name="Brettin T."/>
            <person name="Bruce D."/>
            <person name="Han C."/>
            <person name="Tapia R."/>
            <person name="Schmutz J."/>
            <person name="Larimer F."/>
            <person name="Land M."/>
            <person name="Hauser L."/>
            <person name="Kyrpides N."/>
            <person name="Kim E."/>
            <person name="Lovley D."/>
            <person name="Richardson P."/>
        </authorList>
    </citation>
    <scope>NUCLEOTIDE SEQUENCE [LARGE SCALE GENOMIC DNA]</scope>
    <source>
        <strain>DSM 2379 / NBRC 103807 / OttBd1</strain>
    </source>
</reference>
<sequence length="195" mass="21504">MTRTATIERNTSETRIRLTLNIDGRGETSIGSGVPFLDHMLNLFARHGLFDLSLEACGDTQIDFHHTVEDIGIVLGEAFKQALADKQGINRYGQVTVPMDETLASAVVDISGRPYLVYNVDLPKAKVGDFDVELAQEFFQAFANHCGINLHINLLYGDNLHHIIEACFKAVGRAMDMATRLDPRVEGVMSTKGVL</sequence>
<organism>
    <name type="scientific">Pelobacter propionicus (strain DSM 2379 / NBRC 103807 / OttBd1)</name>
    <dbReference type="NCBI Taxonomy" id="338966"/>
    <lineage>
        <taxon>Bacteria</taxon>
        <taxon>Pseudomonadati</taxon>
        <taxon>Thermodesulfobacteriota</taxon>
        <taxon>Desulfuromonadia</taxon>
        <taxon>Desulfuromonadales</taxon>
        <taxon>Desulfuromonadaceae</taxon>
        <taxon>Pelobacter</taxon>
    </lineage>
</organism>